<sequence length="502" mass="55517">MGVENTKQTMSSQNIKPAKDSDDVLHTQFKEVKRSPMRYTMQLLAALAVSMASLMIGYSSSYTSPALVSMRDNTTATFEVTMDMAMWIGSIMPLSALIGGIIGGPCIEYIGRRNTILSTALPFLAGWLFIALATNVAMILVGRSICGFCVGVASLSLPVYLGESIQPEVRGSLGLLPTVFGNSGILMCFTAGMYLAWRNLALLGACIPIIFLILMFLIPETPRWYISKGKIKEARKSLQWLRGKTADISEELDSIQKMHIESERIATEGALIELFRKNHIKPVFISLGLMFFQQFSGINAVIFYTVQIFKDSGSTVDENLSTIIVGLVNFISTFVAAMIIDRLGRKMLLYISSILMCITLFTFGTFFYVKELMDVTAFGWIPLMSLIVYVIGFSFGFGPIPWLMMGEILPVKIRGTAASVATAFNWSCTFVVTKTYEDLVLHIGPYGTFWLFGTLVAVAFIFVIICVPETRGRSLEEIERRFAGPVRRTSAIANLKPMPITI</sequence>
<comment type="function">
    <text evidence="2">Moderate-capacity facilitative transporter for trehalose. Does not transport maltose, sucrose or lactose. Mediates the bidirectional transfer of trehalose. Responsible for the transport of trehalose synthesized in the fat body and the incorporation of trehalose into other tissues that require a carbon source, thereby regulating trehalose levels in the hemolymph.</text>
</comment>
<comment type="biophysicochemical properties">
    <kinetics>
        <KM evidence="2">9.42 mM for trehalose</KM>
    </kinetics>
</comment>
<comment type="subcellular location">
    <subcellularLocation>
        <location evidence="2">Cell membrane</location>
        <topology evidence="1 2">Multi-pass membrane protein</topology>
    </subcellularLocation>
</comment>
<comment type="similarity">
    <text evidence="1 2">Belongs to the major facilitator superfamily. Sugar transporter (TC 2.A.1.1) family. Trehalose transporter subfamily.</text>
</comment>
<keyword id="KW-1003">Cell membrane</keyword>
<keyword id="KW-0325">Glycoprotein</keyword>
<keyword id="KW-0472">Membrane</keyword>
<keyword id="KW-0762">Sugar transport</keyword>
<keyword id="KW-0812">Transmembrane</keyword>
<keyword id="KW-1133">Transmembrane helix</keyword>
<keyword id="KW-0813">Transport</keyword>
<dbReference type="EMBL" id="AB369549">
    <property type="protein sequence ID" value="BAF96743.1"/>
    <property type="molecule type" value="mRNA"/>
</dbReference>
<dbReference type="RefSeq" id="NP_001107211.1">
    <property type="nucleotide sequence ID" value="NM_001113739.1"/>
</dbReference>
<dbReference type="RefSeq" id="XP_006570642.1">
    <property type="nucleotide sequence ID" value="XM_006570579.2"/>
</dbReference>
<dbReference type="SMR" id="A9ZSY2"/>
<dbReference type="GlyCosmos" id="A9ZSY2">
    <property type="glycosylation" value="2 sites, No reported glycans"/>
</dbReference>
<dbReference type="GeneID" id="551643"/>
<dbReference type="KEGG" id="ame:551643"/>
<dbReference type="CTD" id="100141437"/>
<dbReference type="SABIO-RK" id="A9ZSY2"/>
<dbReference type="GO" id="GO:0005886">
    <property type="term" value="C:plasma membrane"/>
    <property type="evidence" value="ECO:0000314"/>
    <property type="project" value="UniProtKB"/>
</dbReference>
<dbReference type="GO" id="GO:0051119">
    <property type="term" value="F:sugar transmembrane transporter activity"/>
    <property type="evidence" value="ECO:0007669"/>
    <property type="project" value="InterPro"/>
</dbReference>
<dbReference type="GO" id="GO:0015574">
    <property type="term" value="F:trehalose transmembrane transporter activity"/>
    <property type="evidence" value="ECO:0000314"/>
    <property type="project" value="UniProtKB"/>
</dbReference>
<dbReference type="GO" id="GO:0015771">
    <property type="term" value="P:trehalose transport"/>
    <property type="evidence" value="ECO:0000314"/>
    <property type="project" value="UniProtKB"/>
</dbReference>
<dbReference type="CDD" id="cd17358">
    <property type="entry name" value="MFS_GLUT6_8_Class3_like"/>
    <property type="match status" value="1"/>
</dbReference>
<dbReference type="FunFam" id="1.20.1250.20:FF:000055">
    <property type="entry name" value="Facilitated trehalose transporter Tret1-2 homolog"/>
    <property type="match status" value="1"/>
</dbReference>
<dbReference type="Gene3D" id="1.20.1250.20">
    <property type="entry name" value="MFS general substrate transporter like domains"/>
    <property type="match status" value="1"/>
</dbReference>
<dbReference type="InterPro" id="IPR020846">
    <property type="entry name" value="MFS_dom"/>
</dbReference>
<dbReference type="InterPro" id="IPR044775">
    <property type="entry name" value="MFS_ERD6/Tret1-like"/>
</dbReference>
<dbReference type="InterPro" id="IPR005828">
    <property type="entry name" value="MFS_sugar_transport-like"/>
</dbReference>
<dbReference type="InterPro" id="IPR036259">
    <property type="entry name" value="MFS_trans_sf"/>
</dbReference>
<dbReference type="InterPro" id="IPR050549">
    <property type="entry name" value="MFS_Trehalose_Transporter"/>
</dbReference>
<dbReference type="InterPro" id="IPR003663">
    <property type="entry name" value="Sugar/inositol_transpt"/>
</dbReference>
<dbReference type="InterPro" id="IPR005829">
    <property type="entry name" value="Sugar_transporter_CS"/>
</dbReference>
<dbReference type="NCBIfam" id="TIGR00879">
    <property type="entry name" value="SP"/>
    <property type="match status" value="1"/>
</dbReference>
<dbReference type="PANTHER" id="PTHR48021">
    <property type="match status" value="1"/>
</dbReference>
<dbReference type="PANTHER" id="PTHR48021:SF96">
    <property type="entry name" value="FACILITATED TREHALOSE TRANSPORTER TRET1-1-RELATED"/>
    <property type="match status" value="1"/>
</dbReference>
<dbReference type="Pfam" id="PF00083">
    <property type="entry name" value="Sugar_tr"/>
    <property type="match status" value="1"/>
</dbReference>
<dbReference type="PRINTS" id="PR00171">
    <property type="entry name" value="SUGRTRNSPORT"/>
</dbReference>
<dbReference type="SUPFAM" id="SSF103473">
    <property type="entry name" value="MFS general substrate transporter"/>
    <property type="match status" value="1"/>
</dbReference>
<dbReference type="PROSITE" id="PS50850">
    <property type="entry name" value="MFS"/>
    <property type="match status" value="1"/>
</dbReference>
<dbReference type="PROSITE" id="PS00216">
    <property type="entry name" value="SUGAR_TRANSPORT_1"/>
    <property type="match status" value="2"/>
</dbReference>
<dbReference type="PROSITE" id="PS00217">
    <property type="entry name" value="SUGAR_TRANSPORT_2"/>
    <property type="match status" value="1"/>
</dbReference>
<name>TRET1_APILI</name>
<feature type="chain" id="PRO_0000395539" description="Facilitated trehalose transporter Tret1">
    <location>
        <begin position="1"/>
        <end position="502"/>
    </location>
</feature>
<feature type="topological domain" description="Cytoplasmic" evidence="1">
    <location>
        <begin position="1"/>
        <end position="38"/>
    </location>
</feature>
<feature type="transmembrane region" description="Helical; Name=1" evidence="1">
    <location>
        <begin position="39"/>
        <end position="59"/>
    </location>
</feature>
<feature type="topological domain" description="Extracellular" evidence="1">
    <location>
        <begin position="60"/>
        <end position="83"/>
    </location>
</feature>
<feature type="transmembrane region" description="Helical; Name=2" evidence="1">
    <location>
        <begin position="84"/>
        <end position="104"/>
    </location>
</feature>
<feature type="topological domain" description="Cytoplasmic" evidence="1">
    <location>
        <begin position="105"/>
        <end position="120"/>
    </location>
</feature>
<feature type="transmembrane region" description="Helical; Name=3" evidence="1">
    <location>
        <begin position="121"/>
        <end position="141"/>
    </location>
</feature>
<feature type="topological domain" description="Extracellular" evidence="1">
    <location>
        <begin position="142"/>
        <end position="144"/>
    </location>
</feature>
<feature type="transmembrane region" description="Helical; Name=4" evidence="1">
    <location>
        <begin position="145"/>
        <end position="165"/>
    </location>
</feature>
<feature type="topological domain" description="Cytoplasmic" evidence="1">
    <location>
        <begin position="166"/>
        <end position="172"/>
    </location>
</feature>
<feature type="transmembrane region" description="Helical; Name=5" evidence="1">
    <location>
        <begin position="173"/>
        <end position="193"/>
    </location>
</feature>
<feature type="topological domain" description="Extracellular" evidence="1">
    <location>
        <begin position="194"/>
        <end position="199"/>
    </location>
</feature>
<feature type="transmembrane region" description="Helical; Name=6" evidence="1">
    <location>
        <begin position="200"/>
        <end position="220"/>
    </location>
</feature>
<feature type="topological domain" description="Cytoplasmic" evidence="1">
    <location>
        <begin position="221"/>
        <end position="282"/>
    </location>
</feature>
<feature type="transmembrane region" description="Helical; Name=7" evidence="1">
    <location>
        <begin position="283"/>
        <end position="303"/>
    </location>
</feature>
<feature type="topological domain" description="Extracellular" evidence="1">
    <location>
        <begin position="304"/>
        <end position="319"/>
    </location>
</feature>
<feature type="transmembrane region" description="Helical; Name=8" evidence="1">
    <location>
        <begin position="320"/>
        <end position="340"/>
    </location>
</feature>
<feature type="topological domain" description="Cytoplasmic" evidence="1">
    <location>
        <begin position="341"/>
        <end position="346"/>
    </location>
</feature>
<feature type="transmembrane region" description="Helical; Name=9" evidence="1">
    <location>
        <begin position="347"/>
        <end position="367"/>
    </location>
</feature>
<feature type="topological domain" description="Extracellular" evidence="1">
    <location>
        <begin position="368"/>
        <end position="376"/>
    </location>
</feature>
<feature type="transmembrane region" description="Helical; Name=10" evidence="1">
    <location>
        <begin position="377"/>
        <end position="397"/>
    </location>
</feature>
<feature type="topological domain" description="Cytoplasmic" evidence="1">
    <location>
        <begin position="398"/>
        <end position="410"/>
    </location>
</feature>
<feature type="transmembrane region" description="Helical; Name=11" evidence="1">
    <location>
        <begin position="411"/>
        <end position="433"/>
    </location>
</feature>
<feature type="topological domain" description="Extracellular" evidence="1">
    <location>
        <begin position="434"/>
        <end position="446"/>
    </location>
</feature>
<feature type="transmembrane region" description="Helical; Name=12" evidence="1">
    <location>
        <begin position="447"/>
        <end position="467"/>
    </location>
</feature>
<feature type="topological domain" description="Cytoplasmic" evidence="1">
    <location>
        <begin position="468"/>
        <end position="502"/>
    </location>
</feature>
<feature type="glycosylation site" description="N-linked (GlcNAc...) asparagine" evidence="1">
    <location>
        <position position="73"/>
    </location>
</feature>
<feature type="glycosylation site" description="N-linked (GlcNAc...) asparagine" evidence="1">
    <location>
        <position position="319"/>
    </location>
</feature>
<accession>A9ZSY2</accession>
<organism>
    <name type="scientific">Apis mellifera ligustica</name>
    <name type="common">Common honeybee</name>
    <name type="synonym">Italian honeybee</name>
    <dbReference type="NCBI Taxonomy" id="7469"/>
    <lineage>
        <taxon>Eukaryota</taxon>
        <taxon>Metazoa</taxon>
        <taxon>Ecdysozoa</taxon>
        <taxon>Arthropoda</taxon>
        <taxon>Hexapoda</taxon>
        <taxon>Insecta</taxon>
        <taxon>Pterygota</taxon>
        <taxon>Neoptera</taxon>
        <taxon>Endopterygota</taxon>
        <taxon>Hymenoptera</taxon>
        <taxon>Apocrita</taxon>
        <taxon>Aculeata</taxon>
        <taxon>Apoidea</taxon>
        <taxon>Anthophila</taxon>
        <taxon>Apidae</taxon>
        <taxon>Apis</taxon>
    </lineage>
</organism>
<protein>
    <recommendedName>
        <fullName evidence="3">Facilitated trehalose transporter Tret1</fullName>
        <shortName evidence="3">AmTRET1</shortName>
    </recommendedName>
</protein>
<gene>
    <name evidence="4" type="primary">Tret1</name>
</gene>
<reference evidence="4" key="1">
    <citation type="journal article" date="2010" name="Insect Biochem. Mol. Biol.">
        <title>The trehalose transporter 1 gene sequence is conserved in insects and encodes proteins with different kinetic properties involved in trehalose import into peripheral tissues.</title>
        <authorList>
            <person name="Kanamori Y."/>
            <person name="Saito Y."/>
            <person name="Hagiwara-Komoda Y."/>
            <person name="Tanaka D."/>
            <person name="Mitsumasu K."/>
            <person name="Kikuta S."/>
            <person name="Watanabe M."/>
            <person name="Cornette R."/>
            <person name="Kikawada T."/>
            <person name="Okuda T."/>
        </authorList>
    </citation>
    <scope>NUCLEOTIDE SEQUENCE [MRNA]</scope>
    <scope>FUNCTION</scope>
    <scope>BIOPHYSICOCHEMICAL PROPERTIES</scope>
    <scope>SUBCELLULAR LOCATION</scope>
</reference>
<evidence type="ECO:0000255" key="1"/>
<evidence type="ECO:0000269" key="2">
    <source>
    </source>
</evidence>
<evidence type="ECO:0000303" key="3">
    <source>
    </source>
</evidence>
<evidence type="ECO:0000312" key="4">
    <source>
        <dbReference type="EMBL" id="BAF96743.1"/>
    </source>
</evidence>
<proteinExistence type="evidence at protein level"/>